<sequence length="192" mass="21770">MTITISAVILAGGKARRMGGQDKGLQILGKQSLIEHVINRLQPQIHQISINTNRNQTEYAKFGFPVFSDELPDFQGPLSGMLTALEKTKSDFILFTPCDTPFFPMNLLDKLKSAVKNDRTLIAYACDEEREHPVFCLMSVQLKEKLRHYLASGERRLLQFMKENGGISVKFTQEEGNFENFNTLDDLKKTVI</sequence>
<comment type="function">
    <text evidence="1">Transfers a GMP moiety from GTP to Mo-molybdopterin (Mo-MPT) cofactor (Moco or molybdenum cofactor) to form Mo-molybdopterin guanine dinucleotide (Mo-MGD) cofactor.</text>
</comment>
<comment type="catalytic activity">
    <reaction evidence="1">
        <text>Mo-molybdopterin + GTP + H(+) = Mo-molybdopterin guanine dinucleotide + diphosphate</text>
        <dbReference type="Rhea" id="RHEA:34243"/>
        <dbReference type="ChEBI" id="CHEBI:15378"/>
        <dbReference type="ChEBI" id="CHEBI:33019"/>
        <dbReference type="ChEBI" id="CHEBI:37565"/>
        <dbReference type="ChEBI" id="CHEBI:71302"/>
        <dbReference type="ChEBI" id="CHEBI:71310"/>
        <dbReference type="EC" id="2.7.7.77"/>
    </reaction>
</comment>
<comment type="cofactor">
    <cofactor evidence="1">
        <name>Mg(2+)</name>
        <dbReference type="ChEBI" id="CHEBI:18420"/>
    </cofactor>
</comment>
<comment type="subunit">
    <text evidence="1">Monomer.</text>
</comment>
<comment type="subcellular location">
    <subcellularLocation>
        <location evidence="1">Cytoplasm</location>
    </subcellularLocation>
</comment>
<comment type="domain">
    <text evidence="1">The N-terminal domain determines nucleotide recognition and specific binding, while the C-terminal domain determines the specific binding to the target protein.</text>
</comment>
<comment type="similarity">
    <text evidence="1">Belongs to the MobA family.</text>
</comment>
<dbReference type="EC" id="2.7.7.77" evidence="1"/>
<dbReference type="EMBL" id="CP000057">
    <property type="protein sequence ID" value="AAX87890.1"/>
    <property type="molecule type" value="Genomic_DNA"/>
</dbReference>
<dbReference type="RefSeq" id="WP_011272241.1">
    <property type="nucleotide sequence ID" value="NC_007146.2"/>
</dbReference>
<dbReference type="SMR" id="Q4QM57"/>
<dbReference type="KEGG" id="hit:NTHI1010"/>
<dbReference type="HOGENOM" id="CLU_055597_5_1_6"/>
<dbReference type="PHI-base" id="PHI:5304"/>
<dbReference type="Proteomes" id="UP000002525">
    <property type="component" value="Chromosome"/>
</dbReference>
<dbReference type="GO" id="GO:0005737">
    <property type="term" value="C:cytoplasm"/>
    <property type="evidence" value="ECO:0007669"/>
    <property type="project" value="UniProtKB-SubCell"/>
</dbReference>
<dbReference type="GO" id="GO:0005525">
    <property type="term" value="F:GTP binding"/>
    <property type="evidence" value="ECO:0007669"/>
    <property type="project" value="UniProtKB-UniRule"/>
</dbReference>
<dbReference type="GO" id="GO:0046872">
    <property type="term" value="F:metal ion binding"/>
    <property type="evidence" value="ECO:0007669"/>
    <property type="project" value="UniProtKB-KW"/>
</dbReference>
<dbReference type="GO" id="GO:0061603">
    <property type="term" value="F:molybdenum cofactor guanylyltransferase activity"/>
    <property type="evidence" value="ECO:0007669"/>
    <property type="project" value="UniProtKB-EC"/>
</dbReference>
<dbReference type="GO" id="GO:1902758">
    <property type="term" value="P:bis(molybdopterin guanine dinucleotide)molybdenum biosynthetic process"/>
    <property type="evidence" value="ECO:0007669"/>
    <property type="project" value="TreeGrafter"/>
</dbReference>
<dbReference type="CDD" id="cd02503">
    <property type="entry name" value="MobA"/>
    <property type="match status" value="1"/>
</dbReference>
<dbReference type="Gene3D" id="3.90.550.10">
    <property type="entry name" value="Spore Coat Polysaccharide Biosynthesis Protein SpsA, Chain A"/>
    <property type="match status" value="1"/>
</dbReference>
<dbReference type="HAMAP" id="MF_00316">
    <property type="entry name" value="MobA"/>
    <property type="match status" value="1"/>
</dbReference>
<dbReference type="InterPro" id="IPR025877">
    <property type="entry name" value="MobA-like_NTP_Trfase"/>
</dbReference>
<dbReference type="InterPro" id="IPR013482">
    <property type="entry name" value="Molybde_CF_guanTrfase"/>
</dbReference>
<dbReference type="InterPro" id="IPR029044">
    <property type="entry name" value="Nucleotide-diphossugar_trans"/>
</dbReference>
<dbReference type="NCBIfam" id="TIGR02665">
    <property type="entry name" value="molyb_mobA"/>
    <property type="match status" value="1"/>
</dbReference>
<dbReference type="PANTHER" id="PTHR19136">
    <property type="entry name" value="MOLYBDENUM COFACTOR GUANYLYLTRANSFERASE"/>
    <property type="match status" value="1"/>
</dbReference>
<dbReference type="PANTHER" id="PTHR19136:SF81">
    <property type="entry name" value="MOLYBDENUM COFACTOR GUANYLYLTRANSFERASE"/>
    <property type="match status" value="1"/>
</dbReference>
<dbReference type="Pfam" id="PF12804">
    <property type="entry name" value="NTP_transf_3"/>
    <property type="match status" value="1"/>
</dbReference>
<dbReference type="SUPFAM" id="SSF53448">
    <property type="entry name" value="Nucleotide-diphospho-sugar transferases"/>
    <property type="match status" value="1"/>
</dbReference>
<protein>
    <recommendedName>
        <fullName evidence="1">Molybdenum cofactor guanylyltransferase</fullName>
        <shortName evidence="1">MoCo guanylyltransferase</shortName>
        <ecNumber evidence="1">2.7.7.77</ecNumber>
    </recommendedName>
    <alternativeName>
        <fullName evidence="1">GTP:molybdopterin guanylyltransferase</fullName>
    </alternativeName>
    <alternativeName>
        <fullName evidence="1">Mo-MPT guanylyltransferase</fullName>
    </alternativeName>
    <alternativeName>
        <fullName evidence="1">Molybdopterin guanylyltransferase</fullName>
    </alternativeName>
    <alternativeName>
        <fullName evidence="1">Molybdopterin-guanine dinucleotide synthase</fullName>
        <shortName evidence="1">MGD synthase</shortName>
    </alternativeName>
</protein>
<feature type="chain" id="PRO_1000019119" description="Molybdenum cofactor guanylyltransferase">
    <location>
        <begin position="1"/>
        <end position="192"/>
    </location>
</feature>
<feature type="binding site" evidence="1">
    <location>
        <begin position="10"/>
        <end position="12"/>
    </location>
    <ligand>
        <name>GTP</name>
        <dbReference type="ChEBI" id="CHEBI:37565"/>
    </ligand>
</feature>
<feature type="binding site" evidence="1">
    <location>
        <position position="23"/>
    </location>
    <ligand>
        <name>GTP</name>
        <dbReference type="ChEBI" id="CHEBI:37565"/>
    </ligand>
</feature>
<feature type="binding site" evidence="1">
    <location>
        <position position="51"/>
    </location>
    <ligand>
        <name>GTP</name>
        <dbReference type="ChEBI" id="CHEBI:37565"/>
    </ligand>
</feature>
<feature type="binding site" evidence="1">
    <location>
        <position position="69"/>
    </location>
    <ligand>
        <name>GTP</name>
        <dbReference type="ChEBI" id="CHEBI:37565"/>
    </ligand>
</feature>
<feature type="binding site" evidence="1">
    <location>
        <position position="99"/>
    </location>
    <ligand>
        <name>GTP</name>
        <dbReference type="ChEBI" id="CHEBI:37565"/>
    </ligand>
</feature>
<feature type="binding site" evidence="1">
    <location>
        <position position="99"/>
    </location>
    <ligand>
        <name>Mg(2+)</name>
        <dbReference type="ChEBI" id="CHEBI:18420"/>
    </ligand>
</feature>
<accession>Q4QM57</accession>
<reference key="1">
    <citation type="journal article" date="2005" name="J. Bacteriol.">
        <title>Genomic sequence of an otitis media isolate of nontypeable Haemophilus influenzae: comparative study with H. influenzae serotype d, strain KW20.</title>
        <authorList>
            <person name="Harrison A."/>
            <person name="Dyer D.W."/>
            <person name="Gillaspy A."/>
            <person name="Ray W.C."/>
            <person name="Mungur R."/>
            <person name="Carson M.B."/>
            <person name="Zhong H."/>
            <person name="Gipson J."/>
            <person name="Gipson M."/>
            <person name="Johnson L.S."/>
            <person name="Lewis L."/>
            <person name="Bakaletz L.O."/>
            <person name="Munson R.S. Jr."/>
        </authorList>
    </citation>
    <scope>NUCLEOTIDE SEQUENCE [LARGE SCALE GENOMIC DNA]</scope>
    <source>
        <strain>86-028NP</strain>
    </source>
</reference>
<name>MOBA_HAEI8</name>
<gene>
    <name evidence="1" type="primary">mobA</name>
    <name type="ordered locus">NTHI1010</name>
</gene>
<evidence type="ECO:0000255" key="1">
    <source>
        <dbReference type="HAMAP-Rule" id="MF_00316"/>
    </source>
</evidence>
<organism>
    <name type="scientific">Haemophilus influenzae (strain 86-028NP)</name>
    <dbReference type="NCBI Taxonomy" id="281310"/>
    <lineage>
        <taxon>Bacteria</taxon>
        <taxon>Pseudomonadati</taxon>
        <taxon>Pseudomonadota</taxon>
        <taxon>Gammaproteobacteria</taxon>
        <taxon>Pasteurellales</taxon>
        <taxon>Pasteurellaceae</taxon>
        <taxon>Haemophilus</taxon>
    </lineage>
</organism>
<keyword id="KW-0963">Cytoplasm</keyword>
<keyword id="KW-0342">GTP-binding</keyword>
<keyword id="KW-0460">Magnesium</keyword>
<keyword id="KW-0479">Metal-binding</keyword>
<keyword id="KW-0501">Molybdenum cofactor biosynthesis</keyword>
<keyword id="KW-0547">Nucleotide-binding</keyword>
<keyword id="KW-0808">Transferase</keyword>
<proteinExistence type="inferred from homology"/>